<proteinExistence type="inferred from homology"/>
<keyword id="KW-0066">ATP synthesis</keyword>
<keyword id="KW-0139">CF(1)</keyword>
<keyword id="KW-0375">Hydrogen ion transport</keyword>
<keyword id="KW-0406">Ion transport</keyword>
<keyword id="KW-0472">Membrane</keyword>
<keyword id="KW-0793">Thylakoid</keyword>
<keyword id="KW-0813">Transport</keyword>
<organism>
    <name type="scientific">Prochlorococcus marinus (strain NATL1A)</name>
    <dbReference type="NCBI Taxonomy" id="167555"/>
    <lineage>
        <taxon>Bacteria</taxon>
        <taxon>Bacillati</taxon>
        <taxon>Cyanobacteriota</taxon>
        <taxon>Cyanophyceae</taxon>
        <taxon>Synechococcales</taxon>
        <taxon>Prochlorococcaceae</taxon>
        <taxon>Prochlorococcus</taxon>
    </lineage>
</organism>
<accession>A2C4I5</accession>
<reference key="1">
    <citation type="journal article" date="2007" name="PLoS Genet.">
        <title>Patterns and implications of gene gain and loss in the evolution of Prochlorococcus.</title>
        <authorList>
            <person name="Kettler G.C."/>
            <person name="Martiny A.C."/>
            <person name="Huang K."/>
            <person name="Zucker J."/>
            <person name="Coleman M.L."/>
            <person name="Rodrigue S."/>
            <person name="Chen F."/>
            <person name="Lapidus A."/>
            <person name="Ferriera S."/>
            <person name="Johnson J."/>
            <person name="Steglich C."/>
            <person name="Church G.M."/>
            <person name="Richardson P."/>
            <person name="Chisholm S.W."/>
        </authorList>
    </citation>
    <scope>NUCLEOTIDE SEQUENCE [LARGE SCALE GENOMIC DNA]</scope>
    <source>
        <strain>NATL1A</strain>
    </source>
</reference>
<feature type="chain" id="PRO_1000056517" description="ATP synthase epsilon chain">
    <location>
        <begin position="1"/>
        <end position="135"/>
    </location>
</feature>
<evidence type="ECO:0000255" key="1">
    <source>
        <dbReference type="HAMAP-Rule" id="MF_00530"/>
    </source>
</evidence>
<protein>
    <recommendedName>
        <fullName evidence="1">ATP synthase epsilon chain</fullName>
    </recommendedName>
    <alternativeName>
        <fullName evidence="1">ATP synthase F1 sector epsilon subunit</fullName>
    </alternativeName>
    <alternativeName>
        <fullName evidence="1">F-ATPase epsilon subunit</fullName>
    </alternativeName>
</protein>
<comment type="function">
    <text evidence="1">Produces ATP from ADP in the presence of a proton gradient across the membrane.</text>
</comment>
<comment type="subunit">
    <text evidence="1">F-type ATPases have 2 components, CF(1) - the catalytic core - and CF(0) - the membrane proton channel. CF(1) has five subunits: alpha(3), beta(3), gamma(1), delta(1), epsilon(1). CF(0) has three main subunits: a, b and c.</text>
</comment>
<comment type="subcellular location">
    <subcellularLocation>
        <location evidence="1">Cellular thylakoid membrane</location>
        <topology evidence="1">Peripheral membrane protein</topology>
    </subcellularLocation>
</comment>
<comment type="similarity">
    <text evidence="1">Belongs to the ATPase epsilon chain family.</text>
</comment>
<dbReference type="EMBL" id="CP000553">
    <property type="protein sequence ID" value="ABM76395.1"/>
    <property type="molecule type" value="Genomic_DNA"/>
</dbReference>
<dbReference type="RefSeq" id="WP_011824381.1">
    <property type="nucleotide sequence ID" value="NC_008819.1"/>
</dbReference>
<dbReference type="SMR" id="A2C4I5"/>
<dbReference type="KEGG" id="pme:NATL1_18391"/>
<dbReference type="eggNOG" id="COG0355">
    <property type="taxonomic scope" value="Bacteria"/>
</dbReference>
<dbReference type="HOGENOM" id="CLU_084338_1_2_3"/>
<dbReference type="Proteomes" id="UP000002592">
    <property type="component" value="Chromosome"/>
</dbReference>
<dbReference type="GO" id="GO:0031676">
    <property type="term" value="C:plasma membrane-derived thylakoid membrane"/>
    <property type="evidence" value="ECO:0007669"/>
    <property type="project" value="UniProtKB-SubCell"/>
</dbReference>
<dbReference type="GO" id="GO:0045259">
    <property type="term" value="C:proton-transporting ATP synthase complex"/>
    <property type="evidence" value="ECO:0007669"/>
    <property type="project" value="UniProtKB-KW"/>
</dbReference>
<dbReference type="GO" id="GO:0005524">
    <property type="term" value="F:ATP binding"/>
    <property type="evidence" value="ECO:0007669"/>
    <property type="project" value="UniProtKB-UniRule"/>
</dbReference>
<dbReference type="GO" id="GO:0046933">
    <property type="term" value="F:proton-transporting ATP synthase activity, rotational mechanism"/>
    <property type="evidence" value="ECO:0007669"/>
    <property type="project" value="UniProtKB-UniRule"/>
</dbReference>
<dbReference type="CDD" id="cd12152">
    <property type="entry name" value="F1-ATPase_delta"/>
    <property type="match status" value="1"/>
</dbReference>
<dbReference type="Gene3D" id="2.60.15.10">
    <property type="entry name" value="F0F1 ATP synthase delta/epsilon subunit, N-terminal"/>
    <property type="match status" value="1"/>
</dbReference>
<dbReference type="Gene3D" id="1.10.287.540">
    <property type="entry name" value="Helix hairpin bin"/>
    <property type="match status" value="1"/>
</dbReference>
<dbReference type="HAMAP" id="MF_00530">
    <property type="entry name" value="ATP_synth_epsil_bac"/>
    <property type="match status" value="1"/>
</dbReference>
<dbReference type="InterPro" id="IPR001469">
    <property type="entry name" value="ATP_synth_F1_dsu/esu"/>
</dbReference>
<dbReference type="InterPro" id="IPR020546">
    <property type="entry name" value="ATP_synth_F1_dsu/esu_N"/>
</dbReference>
<dbReference type="InterPro" id="IPR020547">
    <property type="entry name" value="ATP_synth_F1_esu_C"/>
</dbReference>
<dbReference type="InterPro" id="IPR036771">
    <property type="entry name" value="ATPsynth_dsu/esu_N"/>
</dbReference>
<dbReference type="NCBIfam" id="TIGR01216">
    <property type="entry name" value="ATP_synt_epsi"/>
    <property type="match status" value="1"/>
</dbReference>
<dbReference type="PANTHER" id="PTHR13822">
    <property type="entry name" value="ATP SYNTHASE DELTA/EPSILON CHAIN"/>
    <property type="match status" value="1"/>
</dbReference>
<dbReference type="PANTHER" id="PTHR13822:SF10">
    <property type="entry name" value="ATP SYNTHASE EPSILON CHAIN, CHLOROPLASTIC"/>
    <property type="match status" value="1"/>
</dbReference>
<dbReference type="Pfam" id="PF00401">
    <property type="entry name" value="ATP-synt_DE"/>
    <property type="match status" value="1"/>
</dbReference>
<dbReference type="Pfam" id="PF02823">
    <property type="entry name" value="ATP-synt_DE_N"/>
    <property type="match status" value="1"/>
</dbReference>
<dbReference type="SUPFAM" id="SSF51344">
    <property type="entry name" value="Epsilon subunit of F1F0-ATP synthase N-terminal domain"/>
    <property type="match status" value="1"/>
</dbReference>
<name>ATPE_PROM1</name>
<gene>
    <name evidence="1" type="primary">atpC</name>
    <name type="ordered locus">NATL1_18391</name>
</gene>
<sequence>MTLTLRVLAPDQSVFDDTADEIILPSTTGLLGVLPGHISMVTAIDFGVLRVLKNGNWDSIALTGGFAEVESNEVTVLVNKAEMGKNIDSGKAEAELEQAKNQLSQNKDQGNSSEKIKAQETLNKAKAWFQASKSD</sequence>